<protein>
    <recommendedName>
        <fullName>Heat shock protein HSP 90</fullName>
    </recommendedName>
    <alternativeName>
        <fullName>Eukaryotic peptide initiation factor 2 kinase, alpha-chain-associated phosphopeptide</fullName>
    </alternativeName>
</protein>
<feature type="initiator methionine" description="Removed" evidence="2">
    <location>
        <position position="1"/>
    </location>
</feature>
<feature type="chain" id="PRO_0000062921" description="Heat shock protein HSP 90">
    <location>
        <begin position="2"/>
        <end position="47" status="greater than"/>
    </location>
</feature>
<feature type="non-consecutive residues" evidence="3">
    <location>
        <begin position="33"/>
        <end position="34"/>
    </location>
</feature>
<feature type="non-terminal residue">
    <location>
        <position position="47"/>
    </location>
</feature>
<reference key="1">
    <citation type="journal article" date="1987" name="Biochemistry">
        <title>The 90-kilodalton peptide of the heme-regulated eIF-2 alpha kinase has sequence similarity with the 90-kilodalton heat shock protein.</title>
        <authorList>
            <person name="Rose D.W."/>
            <person name="Wettenhall R.E.H."/>
            <person name="Kudlicki W."/>
            <person name="Kramer G."/>
            <person name="Hardesty B."/>
        </authorList>
    </citation>
    <scope>PROTEIN SEQUENCE OF 2-47</scope>
    <source>
        <tissue>Reticulocyte</tissue>
    </source>
</reference>
<keyword id="KW-0067">ATP-binding</keyword>
<keyword id="KW-0143">Chaperone</keyword>
<keyword id="KW-0963">Cytoplasm</keyword>
<keyword id="KW-0903">Direct protein sequencing</keyword>
<keyword id="KW-0547">Nucleotide-binding</keyword>
<keyword id="KW-1185">Reference proteome</keyword>
<keyword id="KW-0346">Stress response</keyword>
<proteinExistence type="evidence at protein level"/>
<organism>
    <name type="scientific">Oryctolagus cuniculus</name>
    <name type="common">Rabbit</name>
    <dbReference type="NCBI Taxonomy" id="9986"/>
    <lineage>
        <taxon>Eukaryota</taxon>
        <taxon>Metazoa</taxon>
        <taxon>Chordata</taxon>
        <taxon>Craniata</taxon>
        <taxon>Vertebrata</taxon>
        <taxon>Euteleostomi</taxon>
        <taxon>Mammalia</taxon>
        <taxon>Eutheria</taxon>
        <taxon>Euarchontoglires</taxon>
        <taxon>Glires</taxon>
        <taxon>Lagomorpha</taxon>
        <taxon>Leporidae</taxon>
        <taxon>Oryctolagus</taxon>
    </lineage>
</organism>
<evidence type="ECO:0000250" key="1"/>
<evidence type="ECO:0000269" key="2">
    <source>
    </source>
</evidence>
<evidence type="ECO:0000305" key="3"/>
<comment type="function">
    <text evidence="1">Putative molecular chaperone that may promote the maturation, structural maintenance and proper regulation of specific target proteins.</text>
</comment>
<comment type="subunit">
    <text evidence="1">Homodimer.</text>
</comment>
<comment type="interaction">
    <interactant intactId="EBI-640126">
        <id>P11500</id>
    </interactant>
    <interactant intactId="EBI-295634">
        <id>Q16543</id>
        <label>CDC37</label>
    </interactant>
    <organismsDiffer>true</organismsDiffer>
    <experiments>3</experiments>
</comment>
<comment type="subcellular location">
    <subcellularLocation>
        <location evidence="1">Cytoplasm</location>
    </subcellularLocation>
</comment>
<comment type="miscellaneous">
    <text>This protein is found associated with eIF-2-alpha kinase.</text>
</comment>
<comment type="similarity">
    <text evidence="3">Belongs to the heat shock protein 90 family.</text>
</comment>
<accession>P11500</accession>
<name>HSP90_RABIT</name>
<dbReference type="PIR" id="A29743">
    <property type="entry name" value="A29743"/>
</dbReference>
<dbReference type="PIR" id="B29743">
    <property type="entry name" value="B29743"/>
</dbReference>
<dbReference type="DIP" id="DIP-70N"/>
<dbReference type="IntAct" id="P11500">
    <property type="interactions" value="2"/>
</dbReference>
<dbReference type="BindingDB" id="P11500"/>
<dbReference type="ChEMBL" id="CHEMBL1667702"/>
<dbReference type="InParanoid" id="P11500"/>
<dbReference type="Proteomes" id="UP000001811">
    <property type="component" value="Unplaced"/>
</dbReference>
<dbReference type="GO" id="GO:0005737">
    <property type="term" value="C:cytoplasm"/>
    <property type="evidence" value="ECO:0007669"/>
    <property type="project" value="UniProtKB-SubCell"/>
</dbReference>
<dbReference type="GO" id="GO:0005524">
    <property type="term" value="F:ATP binding"/>
    <property type="evidence" value="ECO:0007669"/>
    <property type="project" value="UniProtKB-KW"/>
</dbReference>
<sequence length="47" mass="5295">MPEEVQTQDQPMETFAVQTFAFQAEIAQLMSLIYESLTDPSKLDSGK</sequence>